<protein>
    <recommendedName>
        <fullName>Methyl-coenzyme M reductase subunit alpha</fullName>
        <ecNumber evidence="1">2.8.4.1</ecNumber>
    </recommendedName>
    <alternativeName>
        <fullName>Coenzyme-B sulfoethylthiotransferase alpha</fullName>
    </alternativeName>
</protein>
<organism>
    <name type="scientific">Methanococcus voltae</name>
    <dbReference type="NCBI Taxonomy" id="2188"/>
    <lineage>
        <taxon>Archaea</taxon>
        <taxon>Methanobacteriati</taxon>
        <taxon>Methanobacteriota</taxon>
        <taxon>Methanomada group</taxon>
        <taxon>Methanococci</taxon>
        <taxon>Methanococcales</taxon>
        <taxon>Methanococcaceae</taxon>
        <taxon>Methanococcus</taxon>
    </lineage>
</organism>
<gene>
    <name type="primary">mcrA</name>
</gene>
<proteinExistence type="inferred from homology"/>
<evidence type="ECO:0000250" key="1">
    <source>
        <dbReference type="UniProtKB" id="P11558"/>
    </source>
</evidence>
<evidence type="ECO:0000305" key="2"/>
<accession>P11559</accession>
<name>MCRA_METVO</name>
<sequence length="555" mass="61227">MEAEKRLFLKALKEKFEEDPKEKFTKFYTYGGWQQSARKQEFVSENEKIVAEKRGGIPMYNPDIGVPLGQRKLMPYKISNTDTYVEGDDLHFMNNAAIQQLWDDIRRTVIVGMDTAHMVLEKRLGVEVTPETINEYMHTINHSLPGGAAVVQEHMVEVHPSLAWDCYAKIFTGDDELADELDDRFVIDINKLFPEEQAEASKAAIGKKTYQVSRVPSLVGRVCDGGTISRWSAMQIGMSFITAYKLCAGEAAIADFSYAAKHADVIQMGNALLGRRARGPNELGGVRFGILSDVVQTTRVSDDPVEQSLEVVATGAALYDQIWLGSYMSGGVGFTQYATASYTDDILDDFSYYGYEYVEKKYGRCGTKATMDVVEDIASEVTLYALEQYDEYPALLEDHFGGSQRAAVAAAAAGISVCMATGNSNAGVNGWYLSQILHKEYHSRLGFYGYDLQDQCGASNSLAIRNDEASPLELRGPNYPNYAMNVGHQGEYAGIAQSAHSARGDAFATNALIKVAFADPSLVFDFSKPRKEIARGALREFEAAGERDPILPAKI</sequence>
<dbReference type="EC" id="2.8.4.1" evidence="1"/>
<dbReference type="EMBL" id="X07793">
    <property type="protein sequence ID" value="CAA30633.1"/>
    <property type="molecule type" value="Genomic_DNA"/>
</dbReference>
<dbReference type="PIR" id="S03261">
    <property type="entry name" value="S03261"/>
</dbReference>
<dbReference type="SMR" id="P11559"/>
<dbReference type="UniPathway" id="UPA00646">
    <property type="reaction ID" value="UER00699"/>
</dbReference>
<dbReference type="GO" id="GO:0005737">
    <property type="term" value="C:cytoplasm"/>
    <property type="evidence" value="ECO:0007669"/>
    <property type="project" value="UniProtKB-SubCell"/>
</dbReference>
<dbReference type="GO" id="GO:0050524">
    <property type="term" value="F:coenzyme-B sulfoethylthiotransferase activity"/>
    <property type="evidence" value="ECO:0007669"/>
    <property type="project" value="UniProtKB-EC"/>
</dbReference>
<dbReference type="GO" id="GO:0046872">
    <property type="term" value="F:metal ion binding"/>
    <property type="evidence" value="ECO:0007669"/>
    <property type="project" value="UniProtKB-KW"/>
</dbReference>
<dbReference type="GO" id="GO:0015948">
    <property type="term" value="P:methanogenesis"/>
    <property type="evidence" value="ECO:0007669"/>
    <property type="project" value="UniProtKB-KW"/>
</dbReference>
<dbReference type="Gene3D" id="3.30.70.470">
    <property type="match status" value="1"/>
</dbReference>
<dbReference type="Gene3D" id="1.20.840.10">
    <property type="entry name" value="Methyl-coenzyme M reductase, alpha/beta subunit, C-terminal"/>
    <property type="match status" value="1"/>
</dbReference>
<dbReference type="Gene3D" id="3.90.390.10">
    <property type="entry name" value="Methyl-coenzyme M Reductase, Chain A, domain 1"/>
    <property type="match status" value="1"/>
</dbReference>
<dbReference type="InterPro" id="IPR016212">
    <property type="entry name" value="Me_CoM_Rdtase_asu"/>
</dbReference>
<dbReference type="InterPro" id="IPR008924">
    <property type="entry name" value="Me_CoM_Rdtase_asu/bsu_C"/>
</dbReference>
<dbReference type="InterPro" id="IPR009047">
    <property type="entry name" value="Me_CoM_Rdtase_asu_C"/>
</dbReference>
<dbReference type="InterPro" id="IPR003183">
    <property type="entry name" value="Me_CoM_Rdtase_asu_N"/>
</dbReference>
<dbReference type="InterPro" id="IPR015811">
    <property type="entry name" value="Me_CoM_Rdtase_asu_N_sub1"/>
</dbReference>
<dbReference type="InterPro" id="IPR015823">
    <property type="entry name" value="Me_CoM_Rdtase_asu_N_sub2"/>
</dbReference>
<dbReference type="InterPro" id="IPR009024">
    <property type="entry name" value="Me_CoM_Rdtase_Fd-like_fold"/>
</dbReference>
<dbReference type="NCBIfam" id="TIGR03256">
    <property type="entry name" value="met_CoM_red_alp"/>
    <property type="match status" value="1"/>
</dbReference>
<dbReference type="Pfam" id="PF02249">
    <property type="entry name" value="MCR_alpha"/>
    <property type="match status" value="1"/>
</dbReference>
<dbReference type="Pfam" id="PF02745">
    <property type="entry name" value="MCR_alpha_N"/>
    <property type="match status" value="1"/>
</dbReference>
<dbReference type="PIRSF" id="PIRSF000262">
    <property type="entry name" value="MCR_alpha"/>
    <property type="match status" value="1"/>
</dbReference>
<dbReference type="SUPFAM" id="SSF48081">
    <property type="entry name" value="Methyl-coenzyme M reductase alpha and beta chain C-terminal domain"/>
    <property type="match status" value="1"/>
</dbReference>
<dbReference type="SUPFAM" id="SSF55088">
    <property type="entry name" value="Methyl-coenzyme M reductase subunits"/>
    <property type="match status" value="1"/>
</dbReference>
<keyword id="KW-0963">Cytoplasm</keyword>
<keyword id="KW-0479">Metal-binding</keyword>
<keyword id="KW-0484">Methanogenesis</keyword>
<keyword id="KW-0488">Methylation</keyword>
<keyword id="KW-0533">Nickel</keyword>
<keyword id="KW-0808">Transferase</keyword>
<comment type="function">
    <text evidence="1">Component of the methyl-coenzyme M reductase (MCR) I that catalyzes the reductive cleavage of methyl-coenzyme M (CoM-S-CH3 or 2-(methylthio)ethanesulfonate) using coenzyme B (CoB or 7-mercaptoheptanoylthreonine phosphate) as reductant which results in the production of methane and the mixed heterodisulfide of CoB and CoM (CoM-S-S-CoB). This is the final step in methanogenesis.</text>
</comment>
<comment type="catalytic activity">
    <reaction evidence="1">
        <text>coenzyme B + methyl-coenzyme M = methane + coenzyme M-coenzyme B heterodisulfide</text>
        <dbReference type="Rhea" id="RHEA:12532"/>
        <dbReference type="ChEBI" id="CHEBI:16183"/>
        <dbReference type="ChEBI" id="CHEBI:58286"/>
        <dbReference type="ChEBI" id="CHEBI:58411"/>
        <dbReference type="ChEBI" id="CHEBI:58596"/>
        <dbReference type="EC" id="2.8.4.1"/>
    </reaction>
    <physiologicalReaction direction="left-to-right" evidence="1">
        <dbReference type="Rhea" id="RHEA:12533"/>
    </physiologicalReaction>
</comment>
<comment type="cofactor">
    <cofactor evidence="1">
        <name>coenzyme F430</name>
        <dbReference type="ChEBI" id="CHEBI:60540"/>
    </cofactor>
    <text evidence="1">Binds 2 coenzyme F430 non-covalently per MCR complex. Coenzyme F430 is a yellow nickel porphinoid. Methyl-coenzyme-M reductase is activated when the enzyme-bound coenzyme F430 is reduced to the Ni(I) oxidation state.</text>
</comment>
<comment type="pathway">
    <text evidence="1">One-carbon metabolism; methyl-coenzyme M reduction; methane from methyl-coenzyme M: step 1/1.</text>
</comment>
<comment type="subunit">
    <text evidence="1">MCR is a hexamer of two alpha, two beta, and two gamma chains, forming a dimer of heterotrimers.</text>
</comment>
<comment type="subcellular location">
    <subcellularLocation>
        <location evidence="1">Cytoplasm</location>
    </subcellularLocation>
</comment>
<comment type="similarity">
    <text evidence="2">Belongs to the methyl-coenzyme M reductase alpha subunit family.</text>
</comment>
<reference key="1">
    <citation type="journal article" date="1988" name="Mol. Gen. Genet.">
        <title>Comparative analysis of genes encoding methyl coenzyme M reductase in methanogenic bacteria.</title>
        <authorList>
            <person name="Klein A."/>
            <person name="Allmansberger R."/>
            <person name="Bokranz M."/>
            <person name="Knaub S."/>
            <person name="Mueller B."/>
            <person name="Muth E."/>
        </authorList>
    </citation>
    <scope>NUCLEOTIDE SEQUENCE [GENOMIC DNA]</scope>
    <source>
        <strain>ATCC 33273 / DSM 1537 / NBRC 100457 / OCM 70 / PS</strain>
    </source>
</reference>
<feature type="chain" id="PRO_0000147461" description="Methyl-coenzyme M reductase subunit alpha">
    <location>
        <begin position="1"/>
        <end position="555"/>
    </location>
</feature>
<feature type="binding site" description="axial binding residue" evidence="1">
    <location>
        <position position="152"/>
    </location>
    <ligand>
        <name>coenzyme F430</name>
        <dbReference type="ChEBI" id="CHEBI:60540"/>
    </ligand>
    <ligandPart>
        <name>Ni</name>
        <dbReference type="ChEBI" id="CHEBI:28112"/>
    </ligandPart>
</feature>
<feature type="binding site" description="in chain A" evidence="1">
    <location>
        <position position="230"/>
    </location>
    <ligand>
        <name>coenzyme B</name>
        <dbReference type="ChEBI" id="CHEBI:58596"/>
        <note>ligand shared between two alpha subunits</note>
    </ligand>
</feature>
<feature type="binding site" description="in chain A" evidence="1">
    <location>
        <begin position="261"/>
        <end position="262"/>
    </location>
    <ligand>
        <name>coenzyme B</name>
        <dbReference type="ChEBI" id="CHEBI:58596"/>
        <note>ligand shared between two alpha subunits</note>
    </ligand>
</feature>
<feature type="binding site" description="in chain B" evidence="1">
    <location>
        <position position="275"/>
    </location>
    <ligand>
        <name>coenzyme B</name>
        <dbReference type="ChEBI" id="CHEBI:58596"/>
        <note>ligand shared between two alpha subunits</note>
    </ligand>
</feature>
<feature type="binding site" evidence="1">
    <location>
        <position position="337"/>
    </location>
    <ligand>
        <name>coenzyme M</name>
        <dbReference type="ChEBI" id="CHEBI:58319"/>
    </ligand>
</feature>
<feature type="binding site" evidence="1">
    <location>
        <position position="448"/>
    </location>
    <ligand>
        <name>coenzyme M</name>
        <dbReference type="ChEBI" id="CHEBI:58319"/>
    </ligand>
</feature>